<keyword id="KW-0067">ATP-binding</keyword>
<keyword id="KW-0418">Kinase</keyword>
<keyword id="KW-0441">Lipid A biosynthesis</keyword>
<keyword id="KW-0444">Lipid biosynthesis</keyword>
<keyword id="KW-0443">Lipid metabolism</keyword>
<keyword id="KW-0547">Nucleotide-binding</keyword>
<keyword id="KW-1185">Reference proteome</keyword>
<keyword id="KW-0808">Transferase</keyword>
<accession>Q0VQP4</accession>
<comment type="function">
    <text evidence="1">Transfers the gamma-phosphate of ATP to the 4'-position of a tetraacyldisaccharide 1-phosphate intermediate (termed DS-1-P) to form tetraacyldisaccharide 1,4'-bis-phosphate (lipid IVA).</text>
</comment>
<comment type="catalytic activity">
    <reaction evidence="1">
        <text>a lipid A disaccharide + ATP = a lipid IVA + ADP + H(+)</text>
        <dbReference type="Rhea" id="RHEA:67840"/>
        <dbReference type="ChEBI" id="CHEBI:15378"/>
        <dbReference type="ChEBI" id="CHEBI:30616"/>
        <dbReference type="ChEBI" id="CHEBI:176343"/>
        <dbReference type="ChEBI" id="CHEBI:176425"/>
        <dbReference type="ChEBI" id="CHEBI:456216"/>
        <dbReference type="EC" id="2.7.1.130"/>
    </reaction>
</comment>
<comment type="pathway">
    <text evidence="1">Glycolipid biosynthesis; lipid IV(A) biosynthesis; lipid IV(A) from (3R)-3-hydroxytetradecanoyl-[acyl-carrier-protein] and UDP-N-acetyl-alpha-D-glucosamine: step 6/6.</text>
</comment>
<comment type="similarity">
    <text evidence="1">Belongs to the LpxK family.</text>
</comment>
<protein>
    <recommendedName>
        <fullName evidence="1">Tetraacyldisaccharide 4'-kinase</fullName>
        <ecNumber evidence="1">2.7.1.130</ecNumber>
    </recommendedName>
    <alternativeName>
        <fullName evidence="1">Lipid A 4'-kinase</fullName>
    </alternativeName>
</protein>
<proteinExistence type="inferred from homology"/>
<name>LPXK_ALCBS</name>
<evidence type="ECO:0000255" key="1">
    <source>
        <dbReference type="HAMAP-Rule" id="MF_00409"/>
    </source>
</evidence>
<organism>
    <name type="scientific">Alcanivorax borkumensis (strain ATCC 700651 / DSM 11573 / NCIMB 13689 / SK2)</name>
    <dbReference type="NCBI Taxonomy" id="393595"/>
    <lineage>
        <taxon>Bacteria</taxon>
        <taxon>Pseudomonadati</taxon>
        <taxon>Pseudomonadota</taxon>
        <taxon>Gammaproteobacteria</taxon>
        <taxon>Oceanospirillales</taxon>
        <taxon>Alcanivoracaceae</taxon>
        <taxon>Alcanivorax</taxon>
    </lineage>
</organism>
<gene>
    <name evidence="1" type="primary">lpxK</name>
    <name type="ordered locus">ABO_1056</name>
</gene>
<dbReference type="EC" id="2.7.1.130" evidence="1"/>
<dbReference type="EMBL" id="AM286690">
    <property type="protein sequence ID" value="CAL16504.1"/>
    <property type="molecule type" value="Genomic_DNA"/>
</dbReference>
<dbReference type="RefSeq" id="WP_011588340.1">
    <property type="nucleotide sequence ID" value="NC_008260.1"/>
</dbReference>
<dbReference type="SMR" id="Q0VQP4"/>
<dbReference type="STRING" id="393595.ABO_1056"/>
<dbReference type="KEGG" id="abo:ABO_1056"/>
<dbReference type="eggNOG" id="COG1663">
    <property type="taxonomic scope" value="Bacteria"/>
</dbReference>
<dbReference type="HOGENOM" id="CLU_038816_2_0_6"/>
<dbReference type="OrthoDB" id="9766423at2"/>
<dbReference type="UniPathway" id="UPA00359">
    <property type="reaction ID" value="UER00482"/>
</dbReference>
<dbReference type="Proteomes" id="UP000008871">
    <property type="component" value="Chromosome"/>
</dbReference>
<dbReference type="GO" id="GO:0005886">
    <property type="term" value="C:plasma membrane"/>
    <property type="evidence" value="ECO:0007669"/>
    <property type="project" value="TreeGrafter"/>
</dbReference>
<dbReference type="GO" id="GO:0005524">
    <property type="term" value="F:ATP binding"/>
    <property type="evidence" value="ECO:0007669"/>
    <property type="project" value="UniProtKB-UniRule"/>
</dbReference>
<dbReference type="GO" id="GO:0009029">
    <property type="term" value="F:tetraacyldisaccharide 4'-kinase activity"/>
    <property type="evidence" value="ECO:0007669"/>
    <property type="project" value="UniProtKB-UniRule"/>
</dbReference>
<dbReference type="GO" id="GO:0009245">
    <property type="term" value="P:lipid A biosynthetic process"/>
    <property type="evidence" value="ECO:0007669"/>
    <property type="project" value="UniProtKB-UniRule"/>
</dbReference>
<dbReference type="GO" id="GO:0009244">
    <property type="term" value="P:lipopolysaccharide core region biosynthetic process"/>
    <property type="evidence" value="ECO:0007669"/>
    <property type="project" value="TreeGrafter"/>
</dbReference>
<dbReference type="HAMAP" id="MF_00409">
    <property type="entry name" value="LpxK"/>
    <property type="match status" value="1"/>
</dbReference>
<dbReference type="InterPro" id="IPR003758">
    <property type="entry name" value="LpxK"/>
</dbReference>
<dbReference type="InterPro" id="IPR027417">
    <property type="entry name" value="P-loop_NTPase"/>
</dbReference>
<dbReference type="NCBIfam" id="TIGR00682">
    <property type="entry name" value="lpxK"/>
    <property type="match status" value="1"/>
</dbReference>
<dbReference type="PANTHER" id="PTHR42724">
    <property type="entry name" value="TETRAACYLDISACCHARIDE 4'-KINASE"/>
    <property type="match status" value="1"/>
</dbReference>
<dbReference type="PANTHER" id="PTHR42724:SF1">
    <property type="entry name" value="TETRAACYLDISACCHARIDE 4'-KINASE, MITOCHONDRIAL-RELATED"/>
    <property type="match status" value="1"/>
</dbReference>
<dbReference type="Pfam" id="PF02606">
    <property type="entry name" value="LpxK"/>
    <property type="match status" value="1"/>
</dbReference>
<dbReference type="SUPFAM" id="SSF52540">
    <property type="entry name" value="P-loop containing nucleoside triphosphate hydrolases"/>
    <property type="match status" value="1"/>
</dbReference>
<reference key="1">
    <citation type="journal article" date="2006" name="Nat. Biotechnol.">
        <title>Genome sequence of the ubiquitous hydrocarbon-degrading marine bacterium Alcanivorax borkumensis.</title>
        <authorList>
            <person name="Schneiker S."/>
            <person name="Martins dos Santos V.A.P."/>
            <person name="Bartels D."/>
            <person name="Bekel T."/>
            <person name="Brecht M."/>
            <person name="Buhrmester J."/>
            <person name="Chernikova T.N."/>
            <person name="Denaro R."/>
            <person name="Ferrer M."/>
            <person name="Gertler C."/>
            <person name="Goesmann A."/>
            <person name="Golyshina O.V."/>
            <person name="Kaminski F."/>
            <person name="Khachane A.N."/>
            <person name="Lang S."/>
            <person name="Linke B."/>
            <person name="McHardy A.C."/>
            <person name="Meyer F."/>
            <person name="Nechitaylo T."/>
            <person name="Puehler A."/>
            <person name="Regenhardt D."/>
            <person name="Rupp O."/>
            <person name="Sabirova J.S."/>
            <person name="Selbitschka W."/>
            <person name="Yakimov M.M."/>
            <person name="Timmis K.N."/>
            <person name="Vorhoelter F.-J."/>
            <person name="Weidner S."/>
            <person name="Kaiser O."/>
            <person name="Golyshin P.N."/>
        </authorList>
    </citation>
    <scope>NUCLEOTIDE SEQUENCE [LARGE SCALE GENOMIC DNA]</scope>
    <source>
        <strain>ATCC 700651 / DSM 11573 / NCIMB 13689 / SK2</strain>
    </source>
</reference>
<feature type="chain" id="PRO_0000291191" description="Tetraacyldisaccharide 4'-kinase">
    <location>
        <begin position="1"/>
        <end position="327"/>
    </location>
</feature>
<feature type="binding site" evidence="1">
    <location>
        <begin position="58"/>
        <end position="65"/>
    </location>
    <ligand>
        <name>ATP</name>
        <dbReference type="ChEBI" id="CHEBI:30616"/>
    </ligand>
</feature>
<sequence>MGSLSEWVQQGWYKGSPWLVPLRPLSALVSFEARRRLQRFRKQRPRPPVPVLVVGNITVGGTGKTPLVIALVEAARSRGLKVAVVSRGFAGKTNHYPQHVTASSDALDMGDEPVLIARRTGVPVVLDPDRRNALDVAIREYAPDLVISDDGLQHYALPRSAEVVVVDAQRGLGNGRCLPEGPLREPATRLKEVDFVISTGGGWAGAYPMIMRPSGVTCLADNRTLTPDDFLRLHPQVHAVAGIGNPKRFFNLLSILGLSATPHVFPDHHAYQPADLAFTDGLPVLMTEKDAVKCAPFAEPHWWFVPVTASLPEGLLDQMLDRALGKE</sequence>